<protein>
    <recommendedName>
        <fullName evidence="1">Endolytic peptidoglycan transglycosylase RlpA</fullName>
        <ecNumber evidence="1">4.2.2.-</ecNumber>
    </recommendedName>
    <alternativeName>
        <fullName>Rare lipoprotein A</fullName>
    </alternativeName>
</protein>
<reference key="1">
    <citation type="journal article" date="2001" name="Nature">
        <title>Genome sequence of Yersinia pestis, the causative agent of plague.</title>
        <authorList>
            <person name="Parkhill J."/>
            <person name="Wren B.W."/>
            <person name="Thomson N.R."/>
            <person name="Titball R.W."/>
            <person name="Holden M.T.G."/>
            <person name="Prentice M.B."/>
            <person name="Sebaihia M."/>
            <person name="James K.D."/>
            <person name="Churcher C.M."/>
            <person name="Mungall K.L."/>
            <person name="Baker S."/>
            <person name="Basham D."/>
            <person name="Bentley S.D."/>
            <person name="Brooks K."/>
            <person name="Cerdeno-Tarraga A.-M."/>
            <person name="Chillingworth T."/>
            <person name="Cronin A."/>
            <person name="Davies R.M."/>
            <person name="Davis P."/>
            <person name="Dougan G."/>
            <person name="Feltwell T."/>
            <person name="Hamlin N."/>
            <person name="Holroyd S."/>
            <person name="Jagels K."/>
            <person name="Karlyshev A.V."/>
            <person name="Leather S."/>
            <person name="Moule S."/>
            <person name="Oyston P.C.F."/>
            <person name="Quail M.A."/>
            <person name="Rutherford K.M."/>
            <person name="Simmonds M."/>
            <person name="Skelton J."/>
            <person name="Stevens K."/>
            <person name="Whitehead S."/>
            <person name="Barrell B.G."/>
        </authorList>
    </citation>
    <scope>NUCLEOTIDE SEQUENCE [LARGE SCALE GENOMIC DNA]</scope>
    <source>
        <strain>CO-92 / Biovar Orientalis</strain>
    </source>
</reference>
<reference key="2">
    <citation type="journal article" date="2002" name="J. Bacteriol.">
        <title>Genome sequence of Yersinia pestis KIM.</title>
        <authorList>
            <person name="Deng W."/>
            <person name="Burland V."/>
            <person name="Plunkett G. III"/>
            <person name="Boutin A."/>
            <person name="Mayhew G.F."/>
            <person name="Liss P."/>
            <person name="Perna N.T."/>
            <person name="Rose D.J."/>
            <person name="Mau B."/>
            <person name="Zhou S."/>
            <person name="Schwartz D.C."/>
            <person name="Fetherston J.D."/>
            <person name="Lindler L.E."/>
            <person name="Brubaker R.R."/>
            <person name="Plano G.V."/>
            <person name="Straley S.C."/>
            <person name="McDonough K.A."/>
            <person name="Nilles M.L."/>
            <person name="Matson J.S."/>
            <person name="Blattner F.R."/>
            <person name="Perry R.D."/>
        </authorList>
    </citation>
    <scope>NUCLEOTIDE SEQUENCE [LARGE SCALE GENOMIC DNA]</scope>
    <source>
        <strain>KIM10+ / Biovar Mediaevalis</strain>
    </source>
</reference>
<reference key="3">
    <citation type="journal article" date="2004" name="DNA Res.">
        <title>Complete genome sequence of Yersinia pestis strain 91001, an isolate avirulent to humans.</title>
        <authorList>
            <person name="Song Y."/>
            <person name="Tong Z."/>
            <person name="Wang J."/>
            <person name="Wang L."/>
            <person name="Guo Z."/>
            <person name="Han Y."/>
            <person name="Zhang J."/>
            <person name="Pei D."/>
            <person name="Zhou D."/>
            <person name="Qin H."/>
            <person name="Pang X."/>
            <person name="Han Y."/>
            <person name="Zhai J."/>
            <person name="Li M."/>
            <person name="Cui B."/>
            <person name="Qi Z."/>
            <person name="Jin L."/>
            <person name="Dai R."/>
            <person name="Chen F."/>
            <person name="Li S."/>
            <person name="Ye C."/>
            <person name="Du Z."/>
            <person name="Lin W."/>
            <person name="Wang J."/>
            <person name="Yu J."/>
            <person name="Yang H."/>
            <person name="Wang J."/>
            <person name="Huang P."/>
            <person name="Yang R."/>
        </authorList>
    </citation>
    <scope>NUCLEOTIDE SEQUENCE [LARGE SCALE GENOMIC DNA]</scope>
    <source>
        <strain>91001 / Biovar Mediaevalis</strain>
    </source>
</reference>
<gene>
    <name evidence="1" type="primary">rlpA</name>
    <name type="ordered locus">YPO2602</name>
    <name type="ordered locus">y1176</name>
    <name type="ordered locus">YP_1111</name>
</gene>
<keyword id="KW-1003">Cell membrane</keyword>
<keyword id="KW-0961">Cell wall biogenesis/degradation</keyword>
<keyword id="KW-0449">Lipoprotein</keyword>
<keyword id="KW-0456">Lyase</keyword>
<keyword id="KW-0472">Membrane</keyword>
<keyword id="KW-0564">Palmitate</keyword>
<keyword id="KW-1185">Reference proteome</keyword>
<keyword id="KW-0732">Signal</keyword>
<name>RLPA_YERPE</name>
<organism>
    <name type="scientific">Yersinia pestis</name>
    <dbReference type="NCBI Taxonomy" id="632"/>
    <lineage>
        <taxon>Bacteria</taxon>
        <taxon>Pseudomonadati</taxon>
        <taxon>Pseudomonadota</taxon>
        <taxon>Gammaproteobacteria</taxon>
        <taxon>Enterobacterales</taxon>
        <taxon>Yersiniaceae</taxon>
        <taxon>Yersinia</taxon>
    </lineage>
</organism>
<sequence>MRKEWLWVGIASVLLSACIDQPPAPQQQVQQTYSGPVEEIGGAEPRYEPFNPNVNQDYKVNGQSYRIIKDPQNFSQIGLASSYGEEARGNTTATGEIFDPNALTAAHPTLPIPSYVRVTNVSNGRQIVVRVNDRGPYTPGRVIDLSRAAADRLNISNNTKVKIDFINVAPDGSLSGPGMVGTTIAKQSYALPSRPDLTSSGMGTPMQQDAPATGAAVQAIDNSQLSGTDATQPVASQSSGFLRAPTPVPAGVLESSEPVIDSAPVTPPVVANPGPVTTTPTSSAISGGYVVQVGALSDAQRAQSWQQSLSQRFGVPGKVSNSGSIYRVQLGPFSHRQQAVDLQQRLSNEAQQQSFIVAAP</sequence>
<proteinExistence type="inferred from homology"/>
<evidence type="ECO:0000255" key="1">
    <source>
        <dbReference type="HAMAP-Rule" id="MF_02071"/>
    </source>
</evidence>
<feature type="signal peptide" evidence="1">
    <location>
        <begin position="1"/>
        <end position="17"/>
    </location>
</feature>
<feature type="chain" id="PRO_0000030800" description="Endolytic peptidoglycan transglycosylase RlpA" evidence="1">
    <location>
        <begin position="18"/>
        <end position="360"/>
    </location>
</feature>
<feature type="domain" description="SPOR" evidence="1">
    <location>
        <begin position="283"/>
        <end position="359"/>
    </location>
</feature>
<feature type="lipid moiety-binding region" description="N-palmitoyl cysteine" evidence="1">
    <location>
        <position position="18"/>
    </location>
</feature>
<feature type="lipid moiety-binding region" description="S-diacylglycerol cysteine" evidence="1">
    <location>
        <position position="18"/>
    </location>
</feature>
<dbReference type="EC" id="4.2.2.-" evidence="1"/>
<dbReference type="EMBL" id="AL590842">
    <property type="protein sequence ID" value="CAL21225.1"/>
    <property type="molecule type" value="Genomic_DNA"/>
</dbReference>
<dbReference type="EMBL" id="AE009952">
    <property type="protein sequence ID" value="AAM84753.1"/>
    <property type="molecule type" value="Genomic_DNA"/>
</dbReference>
<dbReference type="EMBL" id="AE017042">
    <property type="protein sequence ID" value="AAS61357.1"/>
    <property type="molecule type" value="Genomic_DNA"/>
</dbReference>
<dbReference type="PIR" id="AF0317">
    <property type="entry name" value="AF0317"/>
</dbReference>
<dbReference type="RefSeq" id="WP_002210324.1">
    <property type="nucleotide sequence ID" value="NZ_WUCM01000011.1"/>
</dbReference>
<dbReference type="RefSeq" id="YP_002347558.1">
    <property type="nucleotide sequence ID" value="NC_003143.1"/>
</dbReference>
<dbReference type="SMR" id="Q8ZDG6"/>
<dbReference type="STRING" id="214092.YPO2602"/>
<dbReference type="PaxDb" id="214092-YPO2602"/>
<dbReference type="DNASU" id="1146123"/>
<dbReference type="EnsemblBacteria" id="AAS61357">
    <property type="protein sequence ID" value="AAS61357"/>
    <property type="gene ID" value="YP_1111"/>
</dbReference>
<dbReference type="GeneID" id="57976093"/>
<dbReference type="KEGG" id="ype:YPO2602"/>
<dbReference type="KEGG" id="ypk:y1176"/>
<dbReference type="KEGG" id="ypm:YP_1111"/>
<dbReference type="PATRIC" id="fig|214092.21.peg.3031"/>
<dbReference type="eggNOG" id="COG0797">
    <property type="taxonomic scope" value="Bacteria"/>
</dbReference>
<dbReference type="HOGENOM" id="CLU_042923_3_0_6"/>
<dbReference type="OMA" id="PFYSDRI"/>
<dbReference type="OrthoDB" id="9779128at2"/>
<dbReference type="Proteomes" id="UP000000815">
    <property type="component" value="Chromosome"/>
</dbReference>
<dbReference type="Proteomes" id="UP000001019">
    <property type="component" value="Chromosome"/>
</dbReference>
<dbReference type="Proteomes" id="UP000002490">
    <property type="component" value="Chromosome"/>
</dbReference>
<dbReference type="GO" id="GO:0009279">
    <property type="term" value="C:cell outer membrane"/>
    <property type="evidence" value="ECO:0000318"/>
    <property type="project" value="GO_Central"/>
</dbReference>
<dbReference type="GO" id="GO:0005886">
    <property type="term" value="C:plasma membrane"/>
    <property type="evidence" value="ECO:0007669"/>
    <property type="project" value="UniProtKB-SubCell"/>
</dbReference>
<dbReference type="GO" id="GO:0008932">
    <property type="term" value="F:lytic endotransglycosylase activity"/>
    <property type="evidence" value="ECO:0007669"/>
    <property type="project" value="UniProtKB-UniRule"/>
</dbReference>
<dbReference type="GO" id="GO:0042834">
    <property type="term" value="F:peptidoglycan binding"/>
    <property type="evidence" value="ECO:0007669"/>
    <property type="project" value="InterPro"/>
</dbReference>
<dbReference type="GO" id="GO:0071555">
    <property type="term" value="P:cell wall organization"/>
    <property type="evidence" value="ECO:0007669"/>
    <property type="project" value="UniProtKB-KW"/>
</dbReference>
<dbReference type="GO" id="GO:0000270">
    <property type="term" value="P:peptidoglycan metabolic process"/>
    <property type="evidence" value="ECO:0007669"/>
    <property type="project" value="UniProtKB-UniRule"/>
</dbReference>
<dbReference type="CDD" id="cd22268">
    <property type="entry name" value="DPBB_RlpA-like"/>
    <property type="match status" value="1"/>
</dbReference>
<dbReference type="FunFam" id="2.40.40.10:FF:000003">
    <property type="entry name" value="Endolytic peptidoglycan transglycosylase RlpA"/>
    <property type="match status" value="1"/>
</dbReference>
<dbReference type="Gene3D" id="2.40.40.10">
    <property type="entry name" value="RlpA-like domain"/>
    <property type="match status" value="1"/>
</dbReference>
<dbReference type="Gene3D" id="3.30.70.1070">
    <property type="entry name" value="Sporulation related repeat"/>
    <property type="match status" value="1"/>
</dbReference>
<dbReference type="HAMAP" id="MF_02071">
    <property type="entry name" value="RlpA"/>
    <property type="match status" value="1"/>
</dbReference>
<dbReference type="InterPro" id="IPR034718">
    <property type="entry name" value="RlpA"/>
</dbReference>
<dbReference type="InterPro" id="IPR009009">
    <property type="entry name" value="RlpA-like_DPBB"/>
</dbReference>
<dbReference type="InterPro" id="IPR036908">
    <property type="entry name" value="RlpA-like_sf"/>
</dbReference>
<dbReference type="InterPro" id="IPR012997">
    <property type="entry name" value="RplA"/>
</dbReference>
<dbReference type="InterPro" id="IPR007730">
    <property type="entry name" value="SPOR-like_dom"/>
</dbReference>
<dbReference type="InterPro" id="IPR036680">
    <property type="entry name" value="SPOR-like_sf"/>
</dbReference>
<dbReference type="NCBIfam" id="NF007953">
    <property type="entry name" value="PRK10672.1"/>
    <property type="match status" value="1"/>
</dbReference>
<dbReference type="NCBIfam" id="TIGR00413">
    <property type="entry name" value="rlpA"/>
    <property type="match status" value="1"/>
</dbReference>
<dbReference type="PANTHER" id="PTHR34183">
    <property type="entry name" value="ENDOLYTIC PEPTIDOGLYCAN TRANSGLYCOSYLASE RLPA"/>
    <property type="match status" value="1"/>
</dbReference>
<dbReference type="PANTHER" id="PTHR34183:SF1">
    <property type="entry name" value="ENDOLYTIC PEPTIDOGLYCAN TRANSGLYCOSYLASE RLPA"/>
    <property type="match status" value="1"/>
</dbReference>
<dbReference type="Pfam" id="PF03330">
    <property type="entry name" value="DPBB_1"/>
    <property type="match status" value="1"/>
</dbReference>
<dbReference type="Pfam" id="PF05036">
    <property type="entry name" value="SPOR"/>
    <property type="match status" value="1"/>
</dbReference>
<dbReference type="SUPFAM" id="SSF50685">
    <property type="entry name" value="Barwin-like endoglucanases"/>
    <property type="match status" value="1"/>
</dbReference>
<dbReference type="SUPFAM" id="SSF110997">
    <property type="entry name" value="Sporulation related repeat"/>
    <property type="match status" value="1"/>
</dbReference>
<dbReference type="PROSITE" id="PS51257">
    <property type="entry name" value="PROKAR_LIPOPROTEIN"/>
    <property type="match status" value="1"/>
</dbReference>
<dbReference type="PROSITE" id="PS51724">
    <property type="entry name" value="SPOR"/>
    <property type="match status" value="1"/>
</dbReference>
<accession>Q8ZDG6</accession>
<accession>Q0WDT0</accession>
<comment type="function">
    <text evidence="1">Lytic transglycosylase with a strong preference for naked glycan strands that lack stem peptides.</text>
</comment>
<comment type="subcellular location">
    <subcellularLocation>
        <location evidence="1">Cell membrane</location>
        <topology evidence="1">Lipid-anchor</topology>
    </subcellularLocation>
</comment>
<comment type="similarity">
    <text evidence="1">Belongs to the RlpA family.</text>
</comment>